<gene>
    <name type="primary">PSKH2</name>
</gene>
<name>PSKH2_HUMAN</name>
<accession>Q96QS6</accession>
<accession>A0AV22</accession>
<protein>
    <recommendedName>
        <fullName>Serine/threonine-protein kinase H2</fullName>
        <ecNumber>2.7.11.1</ecNumber>
    </recommendedName>
    <alternativeName>
        <fullName>Protein serine kinase H2</fullName>
        <shortName>PSK-H2</shortName>
    </alternativeName>
</protein>
<comment type="catalytic activity">
    <reaction>
        <text>L-seryl-[protein] + ATP = O-phospho-L-seryl-[protein] + ADP + H(+)</text>
        <dbReference type="Rhea" id="RHEA:17989"/>
        <dbReference type="Rhea" id="RHEA-COMP:9863"/>
        <dbReference type="Rhea" id="RHEA-COMP:11604"/>
        <dbReference type="ChEBI" id="CHEBI:15378"/>
        <dbReference type="ChEBI" id="CHEBI:29999"/>
        <dbReference type="ChEBI" id="CHEBI:30616"/>
        <dbReference type="ChEBI" id="CHEBI:83421"/>
        <dbReference type="ChEBI" id="CHEBI:456216"/>
        <dbReference type="EC" id="2.7.11.1"/>
    </reaction>
</comment>
<comment type="catalytic activity">
    <reaction>
        <text>L-threonyl-[protein] + ATP = O-phospho-L-threonyl-[protein] + ADP + H(+)</text>
        <dbReference type="Rhea" id="RHEA:46608"/>
        <dbReference type="Rhea" id="RHEA-COMP:11060"/>
        <dbReference type="Rhea" id="RHEA-COMP:11605"/>
        <dbReference type="ChEBI" id="CHEBI:15378"/>
        <dbReference type="ChEBI" id="CHEBI:30013"/>
        <dbReference type="ChEBI" id="CHEBI:30616"/>
        <dbReference type="ChEBI" id="CHEBI:61977"/>
        <dbReference type="ChEBI" id="CHEBI:456216"/>
        <dbReference type="EC" id="2.7.11.1"/>
    </reaction>
</comment>
<comment type="interaction">
    <interactant intactId="EBI-6424813">
        <id>Q96QS6</id>
    </interactant>
    <interactant intactId="EBI-295634">
        <id>Q16543</id>
        <label>CDC37</label>
    </interactant>
    <organismsDiffer>false</organismsDiffer>
    <experiments>4</experiments>
</comment>
<comment type="interaction">
    <interactant intactId="EBI-6424813">
        <id>Q96QS6</id>
    </interactant>
    <interactant intactId="EBI-296047">
        <id>P07900</id>
        <label>HSP90AA1</label>
    </interactant>
    <organismsDiffer>false</organismsDiffer>
    <experiments>3</experiments>
</comment>
<comment type="interaction">
    <interactant intactId="EBI-6424813">
        <id>Q96QS6</id>
    </interactant>
    <interactant intactId="EBI-352572">
        <id>P08238</id>
        <label>HSP90AB1</label>
    </interactant>
    <organismsDiffer>false</organismsDiffer>
    <experiments>4</experiments>
</comment>
<comment type="similarity">
    <text evidence="4">Belongs to the protein kinase superfamily. CAMK Ser/Thr protein kinase family.</text>
</comment>
<comment type="caution">
    <text evidence="4">Asn-183 is present instead of the conserved Asp which is expected to be an active site residue.</text>
</comment>
<dbReference type="EC" id="2.7.11.1"/>
<dbReference type="EMBL" id="AY037806">
    <property type="protein sequence ID" value="AAK59985.1"/>
    <property type="molecule type" value="mRNA"/>
</dbReference>
<dbReference type="EMBL" id="BC126180">
    <property type="protein sequence ID" value="AAI26181.1"/>
    <property type="molecule type" value="mRNA"/>
</dbReference>
<dbReference type="EMBL" id="BC126182">
    <property type="protein sequence ID" value="AAI26183.1"/>
    <property type="molecule type" value="mRNA"/>
</dbReference>
<dbReference type="CCDS" id="CCDS6240.1"/>
<dbReference type="RefSeq" id="NP_149117.1">
    <property type="nucleotide sequence ID" value="NM_033126.3"/>
</dbReference>
<dbReference type="SMR" id="Q96QS6"/>
<dbReference type="BioGRID" id="124556">
    <property type="interactions" value="66"/>
</dbReference>
<dbReference type="FunCoup" id="Q96QS6">
    <property type="interactions" value="66"/>
</dbReference>
<dbReference type="IntAct" id="Q96QS6">
    <property type="interactions" value="65"/>
</dbReference>
<dbReference type="STRING" id="9606.ENSP00000276616"/>
<dbReference type="iPTMnet" id="Q96QS6"/>
<dbReference type="PhosphoSitePlus" id="Q96QS6"/>
<dbReference type="BioMuta" id="PSKH2"/>
<dbReference type="DMDM" id="74762688"/>
<dbReference type="MassIVE" id="Q96QS6"/>
<dbReference type="PaxDb" id="9606-ENSP00000276616"/>
<dbReference type="PeptideAtlas" id="Q96QS6"/>
<dbReference type="Antibodypedia" id="12608">
    <property type="antibodies" value="117 antibodies from 27 providers"/>
</dbReference>
<dbReference type="DNASU" id="85481"/>
<dbReference type="Ensembl" id="ENST00000276616.3">
    <property type="protein sequence ID" value="ENSP00000276616.2"/>
    <property type="gene ID" value="ENSG00000147613.8"/>
</dbReference>
<dbReference type="GeneID" id="85481"/>
<dbReference type="KEGG" id="hsa:85481"/>
<dbReference type="MANE-Select" id="ENST00000276616.3">
    <property type="protein sequence ID" value="ENSP00000276616.2"/>
    <property type="RefSeq nucleotide sequence ID" value="NM_033126.3"/>
    <property type="RefSeq protein sequence ID" value="NP_149117.1"/>
</dbReference>
<dbReference type="UCSC" id="uc011lfy.3">
    <property type="organism name" value="human"/>
</dbReference>
<dbReference type="AGR" id="HGNC:18997"/>
<dbReference type="CTD" id="85481"/>
<dbReference type="DisGeNET" id="85481"/>
<dbReference type="GeneCards" id="PSKH2"/>
<dbReference type="HGNC" id="HGNC:18997">
    <property type="gene designation" value="PSKH2"/>
</dbReference>
<dbReference type="HPA" id="ENSG00000147613">
    <property type="expression patterns" value="Tissue enriched (retina)"/>
</dbReference>
<dbReference type="MIM" id="620394">
    <property type="type" value="gene"/>
</dbReference>
<dbReference type="neXtProt" id="NX_Q96QS6"/>
<dbReference type="PharmGKB" id="PA134961168"/>
<dbReference type="VEuPathDB" id="HostDB:ENSG00000147613"/>
<dbReference type="eggNOG" id="KOG0032">
    <property type="taxonomic scope" value="Eukaryota"/>
</dbReference>
<dbReference type="GeneTree" id="ENSGT00940000162917"/>
<dbReference type="HOGENOM" id="CLU_000288_63_0_1"/>
<dbReference type="InParanoid" id="Q96QS6"/>
<dbReference type="OMA" id="DHPWVIT"/>
<dbReference type="OrthoDB" id="40902at2759"/>
<dbReference type="PAN-GO" id="Q96QS6">
    <property type="GO annotations" value="0 GO annotations based on evolutionary models"/>
</dbReference>
<dbReference type="PhylomeDB" id="Q96QS6"/>
<dbReference type="TreeFam" id="TF314166"/>
<dbReference type="PathwayCommons" id="Q96QS6"/>
<dbReference type="SignaLink" id="Q96QS6"/>
<dbReference type="BioGRID-ORCS" id="85481">
    <property type="hits" value="11 hits in 1171 CRISPR screens"/>
</dbReference>
<dbReference type="ChiTaRS" id="PSKH2">
    <property type="organism name" value="human"/>
</dbReference>
<dbReference type="GenomeRNAi" id="85481"/>
<dbReference type="Pharos" id="Q96QS6">
    <property type="development level" value="Tdark"/>
</dbReference>
<dbReference type="PRO" id="PR:Q96QS6"/>
<dbReference type="Proteomes" id="UP000005640">
    <property type="component" value="Chromosome 8"/>
</dbReference>
<dbReference type="RNAct" id="Q96QS6">
    <property type="molecule type" value="protein"/>
</dbReference>
<dbReference type="Bgee" id="ENSG00000147613">
    <property type="expression patterns" value="Expressed in male germ line stem cell (sensu Vertebrata) in testis and 8 other cell types or tissues"/>
</dbReference>
<dbReference type="GO" id="GO:0005737">
    <property type="term" value="C:cytoplasm"/>
    <property type="evidence" value="ECO:0000318"/>
    <property type="project" value="GO_Central"/>
</dbReference>
<dbReference type="GO" id="GO:0005524">
    <property type="term" value="F:ATP binding"/>
    <property type="evidence" value="ECO:0007669"/>
    <property type="project" value="UniProtKB-KW"/>
</dbReference>
<dbReference type="GO" id="GO:0106310">
    <property type="term" value="F:protein serine kinase activity"/>
    <property type="evidence" value="ECO:0007669"/>
    <property type="project" value="RHEA"/>
</dbReference>
<dbReference type="GO" id="GO:0004674">
    <property type="term" value="F:protein serine/threonine kinase activity"/>
    <property type="evidence" value="ECO:0000318"/>
    <property type="project" value="GO_Central"/>
</dbReference>
<dbReference type="FunFam" id="1.10.510.10:FF:000571">
    <property type="entry name" value="Maternal embryonic leucine zipper kinase"/>
    <property type="match status" value="1"/>
</dbReference>
<dbReference type="Gene3D" id="1.10.510.10">
    <property type="entry name" value="Transferase(Phosphotransferase) domain 1"/>
    <property type="match status" value="1"/>
</dbReference>
<dbReference type="InterPro" id="IPR011009">
    <property type="entry name" value="Kinase-like_dom_sf"/>
</dbReference>
<dbReference type="InterPro" id="IPR000719">
    <property type="entry name" value="Prot_kinase_dom"/>
</dbReference>
<dbReference type="InterPro" id="IPR017441">
    <property type="entry name" value="Protein_kinase_ATP_BS"/>
</dbReference>
<dbReference type="PANTHER" id="PTHR24347">
    <property type="entry name" value="SERINE/THREONINE-PROTEIN KINASE"/>
    <property type="match status" value="1"/>
</dbReference>
<dbReference type="Pfam" id="PF00069">
    <property type="entry name" value="Pkinase"/>
    <property type="match status" value="1"/>
</dbReference>
<dbReference type="SUPFAM" id="SSF56112">
    <property type="entry name" value="Protein kinase-like (PK-like)"/>
    <property type="match status" value="1"/>
</dbReference>
<dbReference type="PROSITE" id="PS00107">
    <property type="entry name" value="PROTEIN_KINASE_ATP"/>
    <property type="match status" value="1"/>
</dbReference>
<dbReference type="PROSITE" id="PS50011">
    <property type="entry name" value="PROTEIN_KINASE_DOM"/>
    <property type="match status" value="1"/>
</dbReference>
<proteinExistence type="evidence at protein level"/>
<evidence type="ECO:0000255" key="1">
    <source>
        <dbReference type="PROSITE-ProRule" id="PRU00159"/>
    </source>
</evidence>
<evidence type="ECO:0000256" key="2">
    <source>
        <dbReference type="SAM" id="MobiDB-lite"/>
    </source>
</evidence>
<evidence type="ECO:0000269" key="3">
    <source>
    </source>
</evidence>
<evidence type="ECO:0000305" key="4"/>
<feature type="chain" id="PRO_0000086171" description="Serine/threonine-protein kinase H2">
    <location>
        <begin position="1"/>
        <end position="385"/>
    </location>
</feature>
<feature type="domain" description="Protein kinase" evidence="1">
    <location>
        <begin position="63"/>
        <end position="320"/>
    </location>
</feature>
<feature type="region of interest" description="Disordered" evidence="2">
    <location>
        <begin position="342"/>
        <end position="367"/>
    </location>
</feature>
<feature type="compositionally biased region" description="Low complexity" evidence="2">
    <location>
        <begin position="344"/>
        <end position="359"/>
    </location>
</feature>
<feature type="binding site" evidence="1">
    <location>
        <begin position="69"/>
        <end position="77"/>
    </location>
    <ligand>
        <name>ATP</name>
        <dbReference type="ChEBI" id="CHEBI:30616"/>
    </ligand>
</feature>
<feature type="binding site" evidence="1">
    <location>
        <position position="92"/>
    </location>
    <ligand>
        <name>ATP</name>
        <dbReference type="ChEBI" id="CHEBI:30616"/>
    </ligand>
</feature>
<feature type="sequence variant" id="VAR_040615" description="In dbSNP:rs56407605." evidence="3">
    <original>G</original>
    <variation>D</variation>
    <location>
        <position position="72"/>
    </location>
</feature>
<feature type="sequence variant" id="VAR_040616" description="In dbSNP:rs35315725." evidence="3">
    <original>R</original>
    <variation>K</variation>
    <location>
        <position position="79"/>
    </location>
</feature>
<feature type="sequence variant" id="VAR_040617" description="In dbSNP:rs35915498." evidence="3">
    <original>R</original>
    <variation>Q</variation>
    <location>
        <position position="114"/>
    </location>
</feature>
<feature type="sequence variant" id="VAR_040618" description="In a lung adenocarcinoma sample; somatic mutation." evidence="3">
    <original>S</original>
    <variation>I</variation>
    <location>
        <position position="116"/>
    </location>
</feature>
<feature type="sequence variant" id="VAR_040619" description="In dbSNP:rs16879427." evidence="3">
    <original>Q</original>
    <variation>R</variation>
    <location>
        <position position="132"/>
    </location>
</feature>
<feature type="sequence variant" id="VAR_040620" description="In dbSNP:rs56356246." evidence="3">
    <original>R</original>
    <variation>Q</variation>
    <location>
        <position position="148"/>
    </location>
</feature>
<feature type="sequence variant" id="VAR_040621" description="In dbSNP:rs6998760." evidence="3">
    <original>A</original>
    <variation>S</variation>
    <location>
        <position position="176"/>
    </location>
</feature>
<feature type="sequence variant" id="VAR_040622" description="In dbSNP:rs36074412." evidence="3">
    <original>G</original>
    <variation>R</variation>
    <location>
        <position position="211"/>
    </location>
</feature>
<feature type="sequence variant" id="VAR_040623" description="In a lung adenocarcinoma sample; somatic mutation; dbSNP:rs778066815." evidence="3">
    <original>K</original>
    <variation>I</variation>
    <location>
        <position position="212"/>
    </location>
</feature>
<feature type="sequence variant" id="VAR_040624" description="In dbSNP:rs34457516." evidence="3">
    <original>T</original>
    <variation>A</variation>
    <location>
        <position position="225"/>
    </location>
</feature>
<feature type="sequence variant" id="VAR_040625" description="In dbSNP:rs34037815." evidence="3">
    <original>S</original>
    <variation>R</variation>
    <location>
        <position position="266"/>
    </location>
</feature>
<feature type="sequence variant" id="VAR_040626" description="In dbSNP:rs16876805." evidence="3">
    <original>I</original>
    <variation>V</variation>
    <location>
        <position position="336"/>
    </location>
</feature>
<organism>
    <name type="scientific">Homo sapiens</name>
    <name type="common">Human</name>
    <dbReference type="NCBI Taxonomy" id="9606"/>
    <lineage>
        <taxon>Eukaryota</taxon>
        <taxon>Metazoa</taxon>
        <taxon>Chordata</taxon>
        <taxon>Craniata</taxon>
        <taxon>Vertebrata</taxon>
        <taxon>Euteleostomi</taxon>
        <taxon>Mammalia</taxon>
        <taxon>Eutheria</taxon>
        <taxon>Euarchontoglires</taxon>
        <taxon>Primates</taxon>
        <taxon>Haplorrhini</taxon>
        <taxon>Catarrhini</taxon>
        <taxon>Hominidae</taxon>
        <taxon>Homo</taxon>
    </lineage>
</organism>
<sequence length="385" mass="43027">MGCGASRKVVPGPPALAWAKHEGQNQAGVGGAGPGPEAAAQAAQRIQVARFRAKFDPRVLARYDIKALIGTGSFSRVVRVEQKTTKKPFAIKVMETREREGREACVSELSVLRRVSHRYIVQLMEIFETEDQVYMVMELATGGELFDRLIAQGSFTERDAVRILQMVADGIRYLHALQITHRNLKPENLLYYHPGEESKILITDFGLAYSGKKSGDWTMKTLCGTPEYIAPEVLLRKPYTSAVDMWALGVITYALLSGFLPFDDESQTRLYRKILKGKYNYTGEPWPSISHLAKDFIDKLLILEAGHRMSAGQALDHPWVITMAAGSSMKNLQRAISRNLMQRASPHSQSPGSAQSSKSHYSHKSRHMWSKRNLRIVESPLSALL</sequence>
<reference key="1">
    <citation type="submission" date="2001-06" db="EMBL/GenBank/DDBJ databases">
        <authorList>
            <person name="Scharm B."/>
        </authorList>
    </citation>
    <scope>NUCLEOTIDE SEQUENCE [MRNA]</scope>
</reference>
<reference key="2">
    <citation type="journal article" date="2004" name="Genome Res.">
        <title>The status, quality, and expansion of the NIH full-length cDNA project: the Mammalian Gene Collection (MGC).</title>
        <authorList>
            <consortium name="The MGC Project Team"/>
        </authorList>
    </citation>
    <scope>NUCLEOTIDE SEQUENCE [LARGE SCALE MRNA]</scope>
</reference>
<reference key="3">
    <citation type="journal article" date="2007" name="Nature">
        <title>Patterns of somatic mutation in human cancer genomes.</title>
        <authorList>
            <person name="Greenman C."/>
            <person name="Stephens P."/>
            <person name="Smith R."/>
            <person name="Dalgliesh G.L."/>
            <person name="Hunter C."/>
            <person name="Bignell G."/>
            <person name="Davies H."/>
            <person name="Teague J."/>
            <person name="Butler A."/>
            <person name="Stevens C."/>
            <person name="Edkins S."/>
            <person name="O'Meara S."/>
            <person name="Vastrik I."/>
            <person name="Schmidt E.E."/>
            <person name="Avis T."/>
            <person name="Barthorpe S."/>
            <person name="Bhamra G."/>
            <person name="Buck G."/>
            <person name="Choudhury B."/>
            <person name="Clements J."/>
            <person name="Cole J."/>
            <person name="Dicks E."/>
            <person name="Forbes S."/>
            <person name="Gray K."/>
            <person name="Halliday K."/>
            <person name="Harrison R."/>
            <person name="Hills K."/>
            <person name="Hinton J."/>
            <person name="Jenkinson A."/>
            <person name="Jones D."/>
            <person name="Menzies A."/>
            <person name="Mironenko T."/>
            <person name="Perry J."/>
            <person name="Raine K."/>
            <person name="Richardson D."/>
            <person name="Shepherd R."/>
            <person name="Small A."/>
            <person name="Tofts C."/>
            <person name="Varian J."/>
            <person name="Webb T."/>
            <person name="West S."/>
            <person name="Widaa S."/>
            <person name="Yates A."/>
            <person name="Cahill D.P."/>
            <person name="Louis D.N."/>
            <person name="Goldstraw P."/>
            <person name="Nicholson A.G."/>
            <person name="Brasseur F."/>
            <person name="Looijenga L."/>
            <person name="Weber B.L."/>
            <person name="Chiew Y.-E."/>
            <person name="DeFazio A."/>
            <person name="Greaves M.F."/>
            <person name="Green A.R."/>
            <person name="Campbell P."/>
            <person name="Birney E."/>
            <person name="Easton D.F."/>
            <person name="Chenevix-Trench G."/>
            <person name="Tan M.-H."/>
            <person name="Khoo S.K."/>
            <person name="Teh B.T."/>
            <person name="Yuen S.T."/>
            <person name="Leung S.Y."/>
            <person name="Wooster R."/>
            <person name="Futreal P.A."/>
            <person name="Stratton M.R."/>
        </authorList>
    </citation>
    <scope>VARIANTS [LARGE SCALE ANALYSIS] ASP-72; LYS-79; GLN-114; ILE-116; ARG-132; GLN-148; SER-176; ARG-211; ILE-212; ALA-225; ARG-266 AND VAL-336</scope>
</reference>
<keyword id="KW-0067">ATP-binding</keyword>
<keyword id="KW-0418">Kinase</keyword>
<keyword id="KW-0547">Nucleotide-binding</keyword>
<keyword id="KW-1185">Reference proteome</keyword>
<keyword id="KW-0723">Serine/threonine-protein kinase</keyword>
<keyword id="KW-0808">Transferase</keyword>